<comment type="function">
    <text evidence="1">Required for the formation of a threonylcarbamoyl group on adenosine at position 37 (t(6)A37) in tRNAs that read codons beginning with adenine. Is involved in the transfer of the threonylcarbamoyl moiety of threonylcarbamoyl-AMP (TC-AMP) to the N6 group of A37, together with TsaE and TsaB. TsaD likely plays a direct catalytic role in this reaction.</text>
</comment>
<comment type="catalytic activity">
    <reaction evidence="1">
        <text>L-threonylcarbamoyladenylate + adenosine(37) in tRNA = N(6)-L-threonylcarbamoyladenosine(37) in tRNA + AMP + H(+)</text>
        <dbReference type="Rhea" id="RHEA:37059"/>
        <dbReference type="Rhea" id="RHEA-COMP:10162"/>
        <dbReference type="Rhea" id="RHEA-COMP:10163"/>
        <dbReference type="ChEBI" id="CHEBI:15378"/>
        <dbReference type="ChEBI" id="CHEBI:73682"/>
        <dbReference type="ChEBI" id="CHEBI:74411"/>
        <dbReference type="ChEBI" id="CHEBI:74418"/>
        <dbReference type="ChEBI" id="CHEBI:456215"/>
        <dbReference type="EC" id="2.3.1.234"/>
    </reaction>
</comment>
<comment type="cofactor">
    <cofactor evidence="1">
        <name>Fe(2+)</name>
        <dbReference type="ChEBI" id="CHEBI:29033"/>
    </cofactor>
    <text evidence="1">Binds 1 Fe(2+) ion per subunit.</text>
</comment>
<comment type="subcellular location">
    <subcellularLocation>
        <location evidence="1">Cytoplasm</location>
    </subcellularLocation>
</comment>
<comment type="similarity">
    <text evidence="1">Belongs to the KAE1 / TsaD family.</text>
</comment>
<sequence length="336" mass="36145">MKDRYILAFETSCDETSVAVLKNDDELLSNVIASQIESHKRFGGVVPEVASRHHVEVITACIEEALAEAGITEEDVTAVAATYGPGLVGALLVGLSAAKAFAWAHGLPLIPVNHMAGHLMAAQSVEPLEFPLLALLVSGGHTELVYVSEAGDYKIVGETRDDAVGEAYDKVGRVMGLTYPAGREIDELAHQGQDIYDFPRAMIKEDNLEFSFSGLKSAFINLHHNAEQKGESLSTEDLCASFQAAVMDILMAKTKKALEKYPVKTLVVAGGVAANKGLRERLAAEITDVKVIIPPLRLCGDNAGMIAYASVSEWNKENFAGWDLNAKPSLAFDTME</sequence>
<reference key="1">
    <citation type="journal article" date="2009" name="J. Bacteriol.">
        <title>Role of conjugative elements in the evolution of the multidrug-resistant pandemic clone Streptococcus pneumoniae Spain23F ST81.</title>
        <authorList>
            <person name="Croucher N.J."/>
            <person name="Walker D."/>
            <person name="Romero P."/>
            <person name="Lennard N."/>
            <person name="Paterson G.K."/>
            <person name="Bason N.C."/>
            <person name="Mitchell A.M."/>
            <person name="Quail M.A."/>
            <person name="Andrew P.W."/>
            <person name="Parkhill J."/>
            <person name="Bentley S.D."/>
            <person name="Mitchell T.J."/>
        </authorList>
    </citation>
    <scope>NUCLEOTIDE SEQUENCE [LARGE SCALE GENOMIC DNA]</scope>
    <source>
        <strain>ATCC 700669 / Spain 23F-1</strain>
    </source>
</reference>
<protein>
    <recommendedName>
        <fullName evidence="1">tRNA N6-adenosine threonylcarbamoyltransferase</fullName>
        <ecNumber evidence="1">2.3.1.234</ecNumber>
    </recommendedName>
    <alternativeName>
        <fullName evidence="1">N6-L-threonylcarbamoyladenine synthase</fullName>
        <shortName evidence="1">t(6)A synthase</shortName>
    </alternativeName>
    <alternativeName>
        <fullName evidence="1">t(6)A37 threonylcarbamoyladenosine biosynthesis protein TsaD</fullName>
    </alternativeName>
    <alternativeName>
        <fullName evidence="1">tRNA threonylcarbamoyladenosine biosynthesis protein TsaD</fullName>
    </alternativeName>
</protein>
<organism>
    <name type="scientific">Streptococcus pneumoniae (strain ATCC 700669 / Spain 23F-1)</name>
    <dbReference type="NCBI Taxonomy" id="561276"/>
    <lineage>
        <taxon>Bacteria</taxon>
        <taxon>Bacillati</taxon>
        <taxon>Bacillota</taxon>
        <taxon>Bacilli</taxon>
        <taxon>Lactobacillales</taxon>
        <taxon>Streptococcaceae</taxon>
        <taxon>Streptococcus</taxon>
    </lineage>
</organism>
<keyword id="KW-0012">Acyltransferase</keyword>
<keyword id="KW-0963">Cytoplasm</keyword>
<keyword id="KW-0408">Iron</keyword>
<keyword id="KW-0479">Metal-binding</keyword>
<keyword id="KW-0808">Transferase</keyword>
<keyword id="KW-0819">tRNA processing</keyword>
<feature type="chain" id="PRO_1000184983" description="tRNA N6-adenosine threonylcarbamoyltransferase">
    <location>
        <begin position="1"/>
        <end position="336"/>
    </location>
</feature>
<feature type="binding site" evidence="1">
    <location>
        <position position="114"/>
    </location>
    <ligand>
        <name>Fe cation</name>
        <dbReference type="ChEBI" id="CHEBI:24875"/>
    </ligand>
</feature>
<feature type="binding site" evidence="1">
    <location>
        <position position="118"/>
    </location>
    <ligand>
        <name>Fe cation</name>
        <dbReference type="ChEBI" id="CHEBI:24875"/>
    </ligand>
</feature>
<feature type="binding site" evidence="1">
    <location>
        <begin position="136"/>
        <end position="140"/>
    </location>
    <ligand>
        <name>substrate</name>
    </ligand>
</feature>
<feature type="binding site" evidence="1">
    <location>
        <position position="169"/>
    </location>
    <ligand>
        <name>substrate</name>
    </ligand>
</feature>
<feature type="binding site" evidence="1">
    <location>
        <position position="182"/>
    </location>
    <ligand>
        <name>substrate</name>
    </ligand>
</feature>
<feature type="binding site" evidence="1">
    <location>
        <position position="186"/>
    </location>
    <ligand>
        <name>substrate</name>
    </ligand>
</feature>
<feature type="binding site" evidence="1">
    <location>
        <position position="275"/>
    </location>
    <ligand>
        <name>substrate</name>
    </ligand>
</feature>
<feature type="binding site" evidence="1">
    <location>
        <position position="301"/>
    </location>
    <ligand>
        <name>Fe cation</name>
        <dbReference type="ChEBI" id="CHEBI:24875"/>
    </ligand>
</feature>
<accession>B8ZK13</accession>
<name>TSAD_STRPJ</name>
<evidence type="ECO:0000255" key="1">
    <source>
        <dbReference type="HAMAP-Rule" id="MF_01445"/>
    </source>
</evidence>
<dbReference type="EC" id="2.3.1.234" evidence="1"/>
<dbReference type="EMBL" id="FM211187">
    <property type="protein sequence ID" value="CAR68000.1"/>
    <property type="molecule type" value="Genomic_DNA"/>
</dbReference>
<dbReference type="RefSeq" id="WP_000655033.1">
    <property type="nucleotide sequence ID" value="NC_011900.1"/>
</dbReference>
<dbReference type="SMR" id="B8ZK13"/>
<dbReference type="KEGG" id="sne:SPN23F01410"/>
<dbReference type="HOGENOM" id="CLU_023208_0_1_9"/>
<dbReference type="GO" id="GO:0005737">
    <property type="term" value="C:cytoplasm"/>
    <property type="evidence" value="ECO:0007669"/>
    <property type="project" value="UniProtKB-SubCell"/>
</dbReference>
<dbReference type="GO" id="GO:0005506">
    <property type="term" value="F:iron ion binding"/>
    <property type="evidence" value="ECO:0007669"/>
    <property type="project" value="UniProtKB-UniRule"/>
</dbReference>
<dbReference type="GO" id="GO:0061711">
    <property type="term" value="F:N(6)-L-threonylcarbamoyladenine synthase activity"/>
    <property type="evidence" value="ECO:0007669"/>
    <property type="project" value="UniProtKB-EC"/>
</dbReference>
<dbReference type="GO" id="GO:0002949">
    <property type="term" value="P:tRNA threonylcarbamoyladenosine modification"/>
    <property type="evidence" value="ECO:0007669"/>
    <property type="project" value="UniProtKB-UniRule"/>
</dbReference>
<dbReference type="CDD" id="cd24133">
    <property type="entry name" value="ASKHA_NBD_TsaD_bac"/>
    <property type="match status" value="1"/>
</dbReference>
<dbReference type="FunFam" id="3.30.420.40:FF:000012">
    <property type="entry name" value="tRNA N6-adenosine threonylcarbamoyltransferase"/>
    <property type="match status" value="1"/>
</dbReference>
<dbReference type="FunFam" id="3.30.420.40:FF:000040">
    <property type="entry name" value="tRNA N6-adenosine threonylcarbamoyltransferase"/>
    <property type="match status" value="1"/>
</dbReference>
<dbReference type="Gene3D" id="3.30.420.40">
    <property type="match status" value="2"/>
</dbReference>
<dbReference type="HAMAP" id="MF_01445">
    <property type="entry name" value="TsaD"/>
    <property type="match status" value="1"/>
</dbReference>
<dbReference type="InterPro" id="IPR043129">
    <property type="entry name" value="ATPase_NBD"/>
</dbReference>
<dbReference type="InterPro" id="IPR000905">
    <property type="entry name" value="Gcp-like_dom"/>
</dbReference>
<dbReference type="InterPro" id="IPR017861">
    <property type="entry name" value="KAE1/TsaD"/>
</dbReference>
<dbReference type="InterPro" id="IPR017860">
    <property type="entry name" value="Peptidase_M22_CS"/>
</dbReference>
<dbReference type="InterPro" id="IPR022450">
    <property type="entry name" value="TsaD"/>
</dbReference>
<dbReference type="NCBIfam" id="TIGR00329">
    <property type="entry name" value="gcp_kae1"/>
    <property type="match status" value="1"/>
</dbReference>
<dbReference type="NCBIfam" id="TIGR03723">
    <property type="entry name" value="T6A_TsaD_YgjD"/>
    <property type="match status" value="1"/>
</dbReference>
<dbReference type="PANTHER" id="PTHR11735">
    <property type="entry name" value="TRNA N6-ADENOSINE THREONYLCARBAMOYLTRANSFERASE"/>
    <property type="match status" value="1"/>
</dbReference>
<dbReference type="PANTHER" id="PTHR11735:SF6">
    <property type="entry name" value="TRNA N6-ADENOSINE THREONYLCARBAMOYLTRANSFERASE, MITOCHONDRIAL"/>
    <property type="match status" value="1"/>
</dbReference>
<dbReference type="Pfam" id="PF00814">
    <property type="entry name" value="TsaD"/>
    <property type="match status" value="1"/>
</dbReference>
<dbReference type="PRINTS" id="PR00789">
    <property type="entry name" value="OSIALOPTASE"/>
</dbReference>
<dbReference type="SUPFAM" id="SSF53067">
    <property type="entry name" value="Actin-like ATPase domain"/>
    <property type="match status" value="1"/>
</dbReference>
<dbReference type="PROSITE" id="PS01016">
    <property type="entry name" value="GLYCOPROTEASE"/>
    <property type="match status" value="1"/>
</dbReference>
<proteinExistence type="inferred from homology"/>
<gene>
    <name evidence="1" type="primary">tsaD</name>
    <name type="synonym">gcp</name>
    <name type="ordered locus">SPN23F01410</name>
</gene>